<keyword id="KW-0067">ATP-binding</keyword>
<keyword id="KW-0131">Cell cycle</keyword>
<keyword id="KW-0132">Cell division</keyword>
<keyword id="KW-0137">Centromere</keyword>
<keyword id="KW-0158">Chromosome</keyword>
<keyword id="KW-0159">Chromosome partition</keyword>
<keyword id="KW-0175">Coiled coil</keyword>
<keyword id="KW-0963">Cytoplasm</keyword>
<keyword id="KW-0206">Cytoskeleton</keyword>
<keyword id="KW-0995">Kinetochore</keyword>
<keyword id="KW-0493">Microtubule</keyword>
<keyword id="KW-0498">Mitosis</keyword>
<keyword id="KW-0505">Motor protein</keyword>
<keyword id="KW-0547">Nucleotide-binding</keyword>
<keyword id="KW-1185">Reference proteome</keyword>
<comment type="function">
    <text evidence="4">Has a role in establishing metaphase during mitosis. Required for chromosome segregation where it generates tension during kinetochore capturing.</text>
</comment>
<comment type="subunit">
    <text>Heterodimer with klp6.</text>
</comment>
<comment type="interaction">
    <interactant intactId="EBI-1561765">
        <id>O14343</id>
    </interactant>
    <interactant intactId="EBI-1561745">
        <id>O59751</id>
        <label>klp6</label>
    </interactant>
    <organismsDiffer>false</organismsDiffer>
    <experiments>3</experiments>
</comment>
<comment type="subcellular location">
    <subcellularLocation>
        <location evidence="4">Cytoplasm</location>
    </subcellularLocation>
    <subcellularLocation>
        <location evidence="4">Cytoplasm</location>
        <location evidence="4">Cytoskeleton</location>
    </subcellularLocation>
    <subcellularLocation>
        <location evidence="4">Chromosome</location>
        <location evidence="4">Centromere</location>
        <location evidence="4">Kinetochore</location>
    </subcellularLocation>
    <subcellularLocation>
        <location evidence="4">Cytoplasm</location>
        <location evidence="4">Cytoskeleton</location>
        <location evidence="4">Spindle</location>
    </subcellularLocation>
    <text>Cytoplasmic microtubules in interphase, mitotic kinetochores in metaphase and spindle midzone in anaphase and telophase.</text>
</comment>
<comment type="disruption phenotype">
    <text evidence="5 6">Simultaneous disruption of dam1 is lethal and leads to the cut phenotype (septation without chromosome segregation).</text>
</comment>
<comment type="similarity">
    <text evidence="2">Belongs to the TRAFAC class myosin-kinesin ATPase superfamily. Kinesin family. Kinesin II subfamily.</text>
</comment>
<feature type="chain" id="PRO_0000125388" description="Kinesin-like protein 5">
    <location>
        <begin position="1"/>
        <end position="883"/>
    </location>
</feature>
<feature type="domain" description="Kinesin motor" evidence="2">
    <location>
        <begin position="6"/>
        <end position="390"/>
    </location>
</feature>
<feature type="region of interest" description="Disordered" evidence="3">
    <location>
        <begin position="755"/>
        <end position="785"/>
    </location>
</feature>
<feature type="coiled-coil region" evidence="1">
    <location>
        <begin position="396"/>
        <end position="435"/>
    </location>
</feature>
<feature type="coiled-coil region" evidence="1">
    <location>
        <begin position="563"/>
        <end position="588"/>
    </location>
</feature>
<feature type="binding site" evidence="2">
    <location>
        <begin position="144"/>
        <end position="151"/>
    </location>
    <ligand>
        <name>ATP</name>
        <dbReference type="ChEBI" id="CHEBI:30616"/>
    </ligand>
</feature>
<name>KLP5_SCHPO</name>
<reference key="1">
    <citation type="journal article" date="2002" name="Curr. Biol.">
        <title>Two kinesin-like Kin I family proteins in fission yeast regulate the establishment of metaphase and the onset of anaphase A.</title>
        <authorList>
            <person name="Garcia M.A."/>
            <person name="Koonrugsa N."/>
            <person name="Toda T."/>
        </authorList>
    </citation>
    <scope>NUCLEOTIDE SEQUENCE [GENOMIC DNA]</scope>
    <scope>FUNCTION</scope>
    <scope>INTERACTION WITH KLP6</scope>
    <scope>SUBCELLULAR LOCATION</scope>
</reference>
<reference key="2">
    <citation type="journal article" date="2002" name="Nature">
        <title>The genome sequence of Schizosaccharomyces pombe.</title>
        <authorList>
            <person name="Wood V."/>
            <person name="Gwilliam R."/>
            <person name="Rajandream M.A."/>
            <person name="Lyne M.H."/>
            <person name="Lyne R."/>
            <person name="Stewart A."/>
            <person name="Sgouros J.G."/>
            <person name="Peat N."/>
            <person name="Hayles J."/>
            <person name="Baker S.G."/>
            <person name="Basham D."/>
            <person name="Bowman S."/>
            <person name="Brooks K."/>
            <person name="Brown D."/>
            <person name="Brown S."/>
            <person name="Chillingworth T."/>
            <person name="Churcher C.M."/>
            <person name="Collins M."/>
            <person name="Connor R."/>
            <person name="Cronin A."/>
            <person name="Davis P."/>
            <person name="Feltwell T."/>
            <person name="Fraser A."/>
            <person name="Gentles S."/>
            <person name="Goble A."/>
            <person name="Hamlin N."/>
            <person name="Harris D.E."/>
            <person name="Hidalgo J."/>
            <person name="Hodgson G."/>
            <person name="Holroyd S."/>
            <person name="Hornsby T."/>
            <person name="Howarth S."/>
            <person name="Huckle E.J."/>
            <person name="Hunt S."/>
            <person name="Jagels K."/>
            <person name="James K.D."/>
            <person name="Jones L."/>
            <person name="Jones M."/>
            <person name="Leather S."/>
            <person name="McDonald S."/>
            <person name="McLean J."/>
            <person name="Mooney P."/>
            <person name="Moule S."/>
            <person name="Mungall K.L."/>
            <person name="Murphy L.D."/>
            <person name="Niblett D."/>
            <person name="Odell C."/>
            <person name="Oliver K."/>
            <person name="O'Neil S."/>
            <person name="Pearson D."/>
            <person name="Quail M.A."/>
            <person name="Rabbinowitsch E."/>
            <person name="Rutherford K.M."/>
            <person name="Rutter S."/>
            <person name="Saunders D."/>
            <person name="Seeger K."/>
            <person name="Sharp S."/>
            <person name="Skelton J."/>
            <person name="Simmonds M.N."/>
            <person name="Squares R."/>
            <person name="Squares S."/>
            <person name="Stevens K."/>
            <person name="Taylor K."/>
            <person name="Taylor R.G."/>
            <person name="Tivey A."/>
            <person name="Walsh S.V."/>
            <person name="Warren T."/>
            <person name="Whitehead S."/>
            <person name="Woodward J.R."/>
            <person name="Volckaert G."/>
            <person name="Aert R."/>
            <person name="Robben J."/>
            <person name="Grymonprez B."/>
            <person name="Weltjens I."/>
            <person name="Vanstreels E."/>
            <person name="Rieger M."/>
            <person name="Schaefer M."/>
            <person name="Mueller-Auer S."/>
            <person name="Gabel C."/>
            <person name="Fuchs M."/>
            <person name="Duesterhoeft A."/>
            <person name="Fritzc C."/>
            <person name="Holzer E."/>
            <person name="Moestl D."/>
            <person name="Hilbert H."/>
            <person name="Borzym K."/>
            <person name="Langer I."/>
            <person name="Beck A."/>
            <person name="Lehrach H."/>
            <person name="Reinhardt R."/>
            <person name="Pohl T.M."/>
            <person name="Eger P."/>
            <person name="Zimmermann W."/>
            <person name="Wedler H."/>
            <person name="Wambutt R."/>
            <person name="Purnelle B."/>
            <person name="Goffeau A."/>
            <person name="Cadieu E."/>
            <person name="Dreano S."/>
            <person name="Gloux S."/>
            <person name="Lelaure V."/>
            <person name="Mottier S."/>
            <person name="Galibert F."/>
            <person name="Aves S.J."/>
            <person name="Xiang Z."/>
            <person name="Hunt C."/>
            <person name="Moore K."/>
            <person name="Hurst S.M."/>
            <person name="Lucas M."/>
            <person name="Rochet M."/>
            <person name="Gaillardin C."/>
            <person name="Tallada V.A."/>
            <person name="Garzon A."/>
            <person name="Thode G."/>
            <person name="Daga R.R."/>
            <person name="Cruzado L."/>
            <person name="Jimenez J."/>
            <person name="Sanchez M."/>
            <person name="del Rey F."/>
            <person name="Benito J."/>
            <person name="Dominguez A."/>
            <person name="Revuelta J.L."/>
            <person name="Moreno S."/>
            <person name="Armstrong J."/>
            <person name="Forsburg S.L."/>
            <person name="Cerutti L."/>
            <person name="Lowe T."/>
            <person name="McCombie W.R."/>
            <person name="Paulsen I."/>
            <person name="Potashkin J."/>
            <person name="Shpakovski G.V."/>
            <person name="Ussery D."/>
            <person name="Barrell B.G."/>
            <person name="Nurse P."/>
        </authorList>
    </citation>
    <scope>NUCLEOTIDE SEQUENCE [LARGE SCALE GENOMIC DNA]</scope>
    <source>
        <strain>972 / ATCC 24843</strain>
    </source>
</reference>
<reference key="3">
    <citation type="journal article" date="2005" name="EMBO J.">
        <title>The DASH complex and Klp5/Klp6 kinesin coordinate bipolar chromosome attachment in fission yeast.</title>
        <authorList>
            <person name="Sanchez-Perez I."/>
            <person name="Renwick S.J."/>
            <person name="Crawley K."/>
            <person name="Karig I."/>
            <person name="Buck V."/>
            <person name="Meadows J.C."/>
            <person name="Franco-Sanchez A."/>
            <person name="Fleig U."/>
            <person name="Toda T."/>
            <person name="Millar J.B."/>
        </authorList>
    </citation>
    <scope>DISRUPTION PHENOTYPE</scope>
</reference>
<reference key="4">
    <citation type="journal article" date="2012" name="J. Cell Sci.">
        <title>Plo1 phosphorylates Dam1 to promote chromosome bi-orientation in fission yeast.</title>
        <authorList>
            <person name="Buttrick G.J."/>
            <person name="Lancaster T.C."/>
            <person name="Meadows J.C."/>
            <person name="Millar J.B."/>
        </authorList>
    </citation>
    <scope>DISRUPTION PHENOTYPE</scope>
</reference>
<organism>
    <name type="scientific">Schizosaccharomyces pombe (strain 972 / ATCC 24843)</name>
    <name type="common">Fission yeast</name>
    <dbReference type="NCBI Taxonomy" id="284812"/>
    <lineage>
        <taxon>Eukaryota</taxon>
        <taxon>Fungi</taxon>
        <taxon>Dikarya</taxon>
        <taxon>Ascomycota</taxon>
        <taxon>Taphrinomycotina</taxon>
        <taxon>Schizosaccharomycetes</taxon>
        <taxon>Schizosaccharomycetales</taxon>
        <taxon>Schizosaccharomycetaceae</taxon>
        <taxon>Schizosaccharomyces</taxon>
    </lineage>
</organism>
<dbReference type="EMBL" id="AB072924">
    <property type="protein sequence ID" value="BAB69885.1"/>
    <property type="molecule type" value="Genomic_DNA"/>
</dbReference>
<dbReference type="EMBL" id="CU329671">
    <property type="protein sequence ID" value="CAB10160.1"/>
    <property type="molecule type" value="Genomic_DNA"/>
</dbReference>
<dbReference type="PIR" id="T40128">
    <property type="entry name" value="T40128"/>
</dbReference>
<dbReference type="RefSeq" id="NP_595703.1">
    <property type="nucleotide sequence ID" value="NM_001021600.2"/>
</dbReference>
<dbReference type="SMR" id="O14343"/>
<dbReference type="BioGRID" id="276890">
    <property type="interactions" value="65"/>
</dbReference>
<dbReference type="FunCoup" id="O14343">
    <property type="interactions" value="239"/>
</dbReference>
<dbReference type="IntAct" id="O14343">
    <property type="interactions" value="2"/>
</dbReference>
<dbReference type="STRING" id="284812.O14343"/>
<dbReference type="iPTMnet" id="O14343"/>
<dbReference type="PaxDb" id="4896-SPBC2F12.13.1"/>
<dbReference type="EnsemblFungi" id="SPBC2F12.13.1">
    <property type="protein sequence ID" value="SPBC2F12.13.1:pep"/>
    <property type="gene ID" value="SPBC2F12.13"/>
</dbReference>
<dbReference type="GeneID" id="2540361"/>
<dbReference type="KEGG" id="spo:2540361"/>
<dbReference type="PomBase" id="SPBC2F12.13">
    <property type="gene designation" value="klp5"/>
</dbReference>
<dbReference type="VEuPathDB" id="FungiDB:SPBC2F12.13"/>
<dbReference type="eggNOG" id="KOG0242">
    <property type="taxonomic scope" value="Eukaryota"/>
</dbReference>
<dbReference type="HOGENOM" id="CLU_001485_21_1_1"/>
<dbReference type="InParanoid" id="O14343"/>
<dbReference type="OMA" id="MISVDRH"/>
<dbReference type="PhylomeDB" id="O14343"/>
<dbReference type="PRO" id="PR:O14343"/>
<dbReference type="Proteomes" id="UP000002485">
    <property type="component" value="Chromosome II"/>
</dbReference>
<dbReference type="GO" id="GO:0055028">
    <property type="term" value="C:cortical microtubule"/>
    <property type="evidence" value="ECO:0000314"/>
    <property type="project" value="PomBase"/>
</dbReference>
<dbReference type="GO" id="GO:0005737">
    <property type="term" value="C:cytoplasm"/>
    <property type="evidence" value="ECO:0000314"/>
    <property type="project" value="PomBase"/>
</dbReference>
<dbReference type="GO" id="GO:0005829">
    <property type="term" value="C:cytosol"/>
    <property type="evidence" value="ECO:0000304"/>
    <property type="project" value="Reactome"/>
</dbReference>
<dbReference type="GO" id="GO:0005871">
    <property type="term" value="C:kinesin complex"/>
    <property type="evidence" value="ECO:0000318"/>
    <property type="project" value="GO_Central"/>
</dbReference>
<dbReference type="GO" id="GO:0016938">
    <property type="term" value="C:kinesin I complex"/>
    <property type="evidence" value="ECO:0000353"/>
    <property type="project" value="PomBase"/>
</dbReference>
<dbReference type="GO" id="GO:0000776">
    <property type="term" value="C:kinetochore"/>
    <property type="evidence" value="ECO:0000314"/>
    <property type="project" value="PomBase"/>
</dbReference>
<dbReference type="GO" id="GO:0015630">
    <property type="term" value="C:microtubule cytoskeleton"/>
    <property type="evidence" value="ECO:0000314"/>
    <property type="project" value="PomBase"/>
</dbReference>
<dbReference type="GO" id="GO:0072686">
    <property type="term" value="C:mitotic spindle"/>
    <property type="evidence" value="ECO:0000314"/>
    <property type="project" value="PomBase"/>
</dbReference>
<dbReference type="GO" id="GO:0061673">
    <property type="term" value="C:mitotic spindle astral microtubule"/>
    <property type="evidence" value="ECO:0000314"/>
    <property type="project" value="PomBase"/>
</dbReference>
<dbReference type="GO" id="GO:1990023">
    <property type="term" value="C:mitotic spindle midzone"/>
    <property type="evidence" value="ECO:0000314"/>
    <property type="project" value="PomBase"/>
</dbReference>
<dbReference type="GO" id="GO:0044732">
    <property type="term" value="C:mitotic spindle pole body"/>
    <property type="evidence" value="ECO:0007005"/>
    <property type="project" value="PomBase"/>
</dbReference>
<dbReference type="GO" id="GO:0005634">
    <property type="term" value="C:nucleus"/>
    <property type="evidence" value="ECO:0000314"/>
    <property type="project" value="PomBase"/>
</dbReference>
<dbReference type="GO" id="GO:0005873">
    <property type="term" value="C:plus-end kinesin complex"/>
    <property type="evidence" value="ECO:0000353"/>
    <property type="project" value="PomBase"/>
</dbReference>
<dbReference type="GO" id="GO:1990295">
    <property type="term" value="C:post-anaphase microtubule array"/>
    <property type="evidence" value="ECO:0000314"/>
    <property type="project" value="PomBase"/>
</dbReference>
<dbReference type="GO" id="GO:0005524">
    <property type="term" value="F:ATP binding"/>
    <property type="evidence" value="ECO:0007669"/>
    <property type="project" value="UniProtKB-KW"/>
</dbReference>
<dbReference type="GO" id="GO:0016887">
    <property type="term" value="F:ATP hydrolysis activity"/>
    <property type="evidence" value="ECO:0000314"/>
    <property type="project" value="PomBase"/>
</dbReference>
<dbReference type="GO" id="GO:0008017">
    <property type="term" value="F:microtubule binding"/>
    <property type="evidence" value="ECO:0000314"/>
    <property type="project" value="PomBase"/>
</dbReference>
<dbReference type="GO" id="GO:0008574">
    <property type="term" value="F:plus-end-directed microtubule motor activity"/>
    <property type="evidence" value="ECO:0000314"/>
    <property type="project" value="PomBase"/>
</dbReference>
<dbReference type="GO" id="GO:0051301">
    <property type="term" value="P:cell division"/>
    <property type="evidence" value="ECO:0007669"/>
    <property type="project" value="UniProtKB-KW"/>
</dbReference>
<dbReference type="GO" id="GO:1902426">
    <property type="term" value="P:deactivation of mitotic spindle assembly checkpoint"/>
    <property type="evidence" value="ECO:0000315"/>
    <property type="project" value="PomBase"/>
</dbReference>
<dbReference type="GO" id="GO:0099607">
    <property type="term" value="P:lateral attachment of mitotic spindle microtubules to kinetochore"/>
    <property type="evidence" value="ECO:0000315"/>
    <property type="project" value="PomBase"/>
</dbReference>
<dbReference type="GO" id="GO:0000226">
    <property type="term" value="P:microtubule cytoskeleton organization"/>
    <property type="evidence" value="ECO:0000315"/>
    <property type="project" value="PomBase"/>
</dbReference>
<dbReference type="GO" id="GO:0007019">
    <property type="term" value="P:microtubule depolymerization"/>
    <property type="evidence" value="ECO:0000315"/>
    <property type="project" value="PomBase"/>
</dbReference>
<dbReference type="GO" id="GO:0007018">
    <property type="term" value="P:microtubule-based movement"/>
    <property type="evidence" value="ECO:0000318"/>
    <property type="project" value="GO_Central"/>
</dbReference>
<dbReference type="GO" id="GO:0007079">
    <property type="term" value="P:mitotic chromosome movement towards spindle pole"/>
    <property type="evidence" value="ECO:0000269"/>
    <property type="project" value="PomBase"/>
</dbReference>
<dbReference type="GO" id="GO:1990942">
    <property type="term" value="P:mitotic metaphase chromosome recapture"/>
    <property type="evidence" value="ECO:0000315"/>
    <property type="project" value="PomBase"/>
</dbReference>
<dbReference type="GO" id="GO:1990758">
    <property type="term" value="P:mitotic sister chromatid biorientation"/>
    <property type="evidence" value="ECO:0000315"/>
    <property type="project" value="PomBase"/>
</dbReference>
<dbReference type="GO" id="GO:0000070">
    <property type="term" value="P:mitotic sister chromatid segregation"/>
    <property type="evidence" value="ECO:0000315"/>
    <property type="project" value="PomBase"/>
</dbReference>
<dbReference type="GO" id="GO:0000022">
    <property type="term" value="P:mitotic spindle elongation"/>
    <property type="evidence" value="ECO:0000315"/>
    <property type="project" value="PomBase"/>
</dbReference>
<dbReference type="GO" id="GO:0061804">
    <property type="term" value="P:mitotic spindle formation (spindle phase one)"/>
    <property type="evidence" value="ECO:0000315"/>
    <property type="project" value="PomBase"/>
</dbReference>
<dbReference type="GO" id="GO:0007052">
    <property type="term" value="P:mitotic spindle organization"/>
    <property type="evidence" value="ECO:0000315"/>
    <property type="project" value="PomBase"/>
</dbReference>
<dbReference type="GO" id="GO:0051647">
    <property type="term" value="P:nucleus localization"/>
    <property type="evidence" value="ECO:0000315"/>
    <property type="project" value="PomBase"/>
</dbReference>
<dbReference type="GO" id="GO:0070462">
    <property type="term" value="P:plus-end specific microtubule depolymerization"/>
    <property type="evidence" value="ECO:0000314"/>
    <property type="project" value="PomBase"/>
</dbReference>
<dbReference type="GO" id="GO:0140210">
    <property type="term" value="P:protein transport along microtubule to kinetochore"/>
    <property type="evidence" value="ECO:0000315"/>
    <property type="project" value="PomBase"/>
</dbReference>
<dbReference type="CDD" id="cd01370">
    <property type="entry name" value="KISc_KIP3_like"/>
    <property type="match status" value="1"/>
</dbReference>
<dbReference type="FunFam" id="3.40.850.10:FF:000053">
    <property type="entry name" value="Kinesin family"/>
    <property type="match status" value="1"/>
</dbReference>
<dbReference type="Gene3D" id="3.40.850.10">
    <property type="entry name" value="Kinesin motor domain"/>
    <property type="match status" value="1"/>
</dbReference>
<dbReference type="InterPro" id="IPR027640">
    <property type="entry name" value="Kinesin-like_fam"/>
</dbReference>
<dbReference type="InterPro" id="IPR019821">
    <property type="entry name" value="Kinesin_motor_CS"/>
</dbReference>
<dbReference type="InterPro" id="IPR001752">
    <property type="entry name" value="Kinesin_motor_dom"/>
</dbReference>
<dbReference type="InterPro" id="IPR036961">
    <property type="entry name" value="Kinesin_motor_dom_sf"/>
</dbReference>
<dbReference type="InterPro" id="IPR027417">
    <property type="entry name" value="P-loop_NTPase"/>
</dbReference>
<dbReference type="PANTHER" id="PTHR47968">
    <property type="entry name" value="CENTROMERE PROTEIN E"/>
    <property type="match status" value="1"/>
</dbReference>
<dbReference type="PANTHER" id="PTHR47968:SF13">
    <property type="entry name" value="KINESIN-LIKE PROTEIN KIF19 ISOFORM X1"/>
    <property type="match status" value="1"/>
</dbReference>
<dbReference type="Pfam" id="PF00225">
    <property type="entry name" value="Kinesin"/>
    <property type="match status" value="1"/>
</dbReference>
<dbReference type="PRINTS" id="PR00380">
    <property type="entry name" value="KINESINHEAVY"/>
</dbReference>
<dbReference type="SMART" id="SM00129">
    <property type="entry name" value="KISc"/>
    <property type="match status" value="1"/>
</dbReference>
<dbReference type="SUPFAM" id="SSF52540">
    <property type="entry name" value="P-loop containing nucleoside triphosphate hydrolases"/>
    <property type="match status" value="1"/>
</dbReference>
<dbReference type="PROSITE" id="PS00411">
    <property type="entry name" value="KINESIN_MOTOR_1"/>
    <property type="match status" value="1"/>
</dbReference>
<dbReference type="PROSITE" id="PS50067">
    <property type="entry name" value="KINESIN_MOTOR_2"/>
    <property type="match status" value="1"/>
</dbReference>
<gene>
    <name type="primary">klp5</name>
    <name type="ORF">SPBC2F12.13</name>
</gene>
<protein>
    <recommendedName>
        <fullName>Kinesin-like protein 5</fullName>
    </recommendedName>
</protein>
<sequence>MSRQSSITVTVRVRPFSTAESANLIASSDRLSFGTSSSLRNPGSGRQIRRVVKVLDGRVLVFDPPDETTATLSATNRRLSTSQQSLARLSRKSNNSAGFGRDLRYAFDRVFDETATQQQVYERTARPLLDNILDGFNATIFAYGATGCGKTHTISGTMQDPGLIYLTLKELFERMDHLRDEKIFDLRLSYLEIYNETIRDLLVSPTPNQAKPLNLREDADRRITVPGLTSLSPESLEEIIDIIMKGNANRTMSPTEANAASSRSHAVLQVTLIQKPRTAGINEDHTLATLSIIDLAGSERATATKLRGSRLFEGANINKSLLALGNCINALCDPHRRAHVPYRDSKLTRLLKFSLGGNCRTVMIVCVSPSSVHYEETHNTLKYANRAKNIKTEVLRNMISVDRHVSQYVKAIVELREQISELENRLAQIDLSSQSNGSDQDAVTQSFAHESKLAEARNLLRMTFEETLPLQNDTINKVEKVKHFDDSIRVLKYWLSCYERILPNSADERVFLVRSKLESLLTRRAEIIADIDPELVYQKFQRSVSHIINTYKQEGATMYADVLQDEVDLLKSIIENQVLDAQNKVDEFTPVLESLLRSSFKASSLLKEGGMQELFSILEKWLLGIGLGEKPNISVLSESYKLNSTSDDSRTINRDRVHSFPTQPLLNNNLPRMFFVKSPKKPVVFSKRSPKKRVRFDDSMSTSDSGASAYNSPIQTSKLKNMNFFNTMHMPSTPAHKRPENKNQIDVEINLTSPVSPMLEDKPEPGLLIKSPLEKKQEVNSESTQLDQLLAEDSSTDDVSLPHLDTIDLDGSPVPKVPDLNFSRANMDSPTFILNNEAIHNFDFSKPKTRQSLSSLTTLHLSNPANIIRKSLSMAENEEEKAT</sequence>
<evidence type="ECO:0000255" key="1"/>
<evidence type="ECO:0000255" key="2">
    <source>
        <dbReference type="PROSITE-ProRule" id="PRU00283"/>
    </source>
</evidence>
<evidence type="ECO:0000256" key="3">
    <source>
        <dbReference type="SAM" id="MobiDB-lite"/>
    </source>
</evidence>
<evidence type="ECO:0000269" key="4">
    <source>
    </source>
</evidence>
<evidence type="ECO:0000269" key="5">
    <source>
    </source>
</evidence>
<evidence type="ECO:0000269" key="6">
    <source>
    </source>
</evidence>
<proteinExistence type="evidence at protein level"/>
<accession>O14343</accession>